<accession>Q2FX12</accession>
<name>PTPA_STAA8</name>
<comment type="function">
    <text evidence="1">Secreted tyrosine phosphatase that plays a critical role during infection as a bacterial effector protein that counteracts host defenses. Required for intramacrophage survival.</text>
</comment>
<comment type="catalytic activity">
    <reaction evidence="1">
        <text>O-phospho-L-tyrosyl-[protein] + H2O = L-tyrosyl-[protein] + phosphate</text>
        <dbReference type="Rhea" id="RHEA:10684"/>
        <dbReference type="Rhea" id="RHEA-COMP:10136"/>
        <dbReference type="Rhea" id="RHEA-COMP:20101"/>
        <dbReference type="ChEBI" id="CHEBI:15377"/>
        <dbReference type="ChEBI" id="CHEBI:43474"/>
        <dbReference type="ChEBI" id="CHEBI:46858"/>
        <dbReference type="ChEBI" id="CHEBI:61978"/>
        <dbReference type="EC" id="3.1.3.48"/>
    </reaction>
</comment>
<comment type="subunit">
    <text evidence="1">Interacts with host CORO1A.</text>
</comment>
<comment type="subcellular location">
    <subcellularLocation>
        <location evidence="1">Secreted</location>
    </subcellularLocation>
    <text evidence="1">Secreted intracellularly upon bacterial infection of macrophages.</text>
</comment>
<comment type="PTM">
    <text evidence="1">Phosphorylations at Tyr-122 and Tyr-123 are essential for phosphatase activity.</text>
</comment>
<comment type="similarity">
    <text evidence="3">Belongs to the low molecular weight phosphotyrosine protein phosphatase family.</text>
</comment>
<organism>
    <name type="scientific">Staphylococcus aureus (strain NCTC 8325 / PS 47)</name>
    <dbReference type="NCBI Taxonomy" id="93061"/>
    <lineage>
        <taxon>Bacteria</taxon>
        <taxon>Bacillati</taxon>
        <taxon>Bacillota</taxon>
        <taxon>Bacilli</taxon>
        <taxon>Bacillales</taxon>
        <taxon>Staphylococcaceae</taxon>
        <taxon>Staphylococcus</taxon>
    </lineage>
</organism>
<dbReference type="EC" id="3.1.3.48"/>
<dbReference type="EMBL" id="CP000253">
    <property type="protein sequence ID" value="ABD31145.1"/>
    <property type="molecule type" value="Genomic_DNA"/>
</dbReference>
<dbReference type="RefSeq" id="WP_000228666.1">
    <property type="nucleotide sequence ID" value="NZ_LS483365.1"/>
</dbReference>
<dbReference type="RefSeq" id="YP_500586.1">
    <property type="nucleotide sequence ID" value="NC_007795.1"/>
</dbReference>
<dbReference type="SMR" id="Q2FX12"/>
<dbReference type="STRING" id="93061.SAOUHSC_02095"/>
<dbReference type="PaxDb" id="1280-SAXN108_1978"/>
<dbReference type="GeneID" id="3921167"/>
<dbReference type="KEGG" id="sao:SAOUHSC_02095"/>
<dbReference type="PATRIC" id="fig|93061.5.peg.1900"/>
<dbReference type="eggNOG" id="COG0394">
    <property type="taxonomic scope" value="Bacteria"/>
</dbReference>
<dbReference type="HOGENOM" id="CLU_071415_2_3_9"/>
<dbReference type="OrthoDB" id="9784339at2"/>
<dbReference type="PHI-base" id="PHI:8401"/>
<dbReference type="PRO" id="PR:Q2FX12"/>
<dbReference type="Proteomes" id="UP000008816">
    <property type="component" value="Chromosome"/>
</dbReference>
<dbReference type="GO" id="GO:0005576">
    <property type="term" value="C:extracellular region"/>
    <property type="evidence" value="ECO:0007669"/>
    <property type="project" value="UniProtKB-SubCell"/>
</dbReference>
<dbReference type="GO" id="GO:0004725">
    <property type="term" value="F:protein tyrosine phosphatase activity"/>
    <property type="evidence" value="ECO:0000318"/>
    <property type="project" value="GO_Central"/>
</dbReference>
<dbReference type="CDD" id="cd16343">
    <property type="entry name" value="LMWPTP"/>
    <property type="match status" value="1"/>
</dbReference>
<dbReference type="FunFam" id="3.40.50.2300:FF:000268">
    <property type="entry name" value="Low molecular weight protein-tyrosine-phosphatase PtpA"/>
    <property type="match status" value="1"/>
</dbReference>
<dbReference type="Gene3D" id="3.40.50.2300">
    <property type="match status" value="1"/>
</dbReference>
<dbReference type="InterPro" id="IPR050438">
    <property type="entry name" value="LMW_PTPase"/>
</dbReference>
<dbReference type="InterPro" id="IPR023485">
    <property type="entry name" value="Ptyr_pPase"/>
</dbReference>
<dbReference type="InterPro" id="IPR036196">
    <property type="entry name" value="Ptyr_pPase_sf"/>
</dbReference>
<dbReference type="InterPro" id="IPR017867">
    <property type="entry name" value="Tyr_phospatase_low_mol_wt"/>
</dbReference>
<dbReference type="PANTHER" id="PTHR11717:SF7">
    <property type="entry name" value="LOW MOLECULAR WEIGHT PHOSPHOTYROSINE PROTEIN PHOSPHATASE"/>
    <property type="match status" value="1"/>
</dbReference>
<dbReference type="PANTHER" id="PTHR11717">
    <property type="entry name" value="LOW MOLECULAR WEIGHT PROTEIN TYROSINE PHOSPHATASE"/>
    <property type="match status" value="1"/>
</dbReference>
<dbReference type="Pfam" id="PF01451">
    <property type="entry name" value="LMWPc"/>
    <property type="match status" value="1"/>
</dbReference>
<dbReference type="PRINTS" id="PR00719">
    <property type="entry name" value="LMWPTPASE"/>
</dbReference>
<dbReference type="SMART" id="SM00226">
    <property type="entry name" value="LMWPc"/>
    <property type="match status" value="1"/>
</dbReference>
<dbReference type="SUPFAM" id="SSF52788">
    <property type="entry name" value="Phosphotyrosine protein phosphatases I"/>
    <property type="match status" value="1"/>
</dbReference>
<feature type="chain" id="PRO_0000300664" description="Low molecular weight protein-tyrosine-phosphatase PtpA">
    <location>
        <begin position="1"/>
        <end position="154"/>
    </location>
</feature>
<feature type="active site" description="Nucleophile" evidence="2">
    <location>
        <position position="8"/>
    </location>
</feature>
<feature type="active site" evidence="2">
    <location>
        <position position="14"/>
    </location>
</feature>
<feature type="active site" description="Proton donor" evidence="2">
    <location>
        <position position="120"/>
    </location>
</feature>
<proteinExistence type="inferred from homology"/>
<sequence length="154" mass="17491">MVDVAFVCLGNICRSPMAEAIMRQRLKDRNIHDIKVHSRGTGSWNLGEPPHEGTQKILNKHNIPFDGMISELFEATDDFDYIVAMDQSNVDNIKSINPNLKGQLFKLLEFSNMEESDVPDPYYTNNFEGVYDMVLSSCDNLIDYIVKDANLKEG</sequence>
<gene>
    <name type="primary">ptpA</name>
    <name type="ordered locus">SAOUHSC_02095</name>
</gene>
<protein>
    <recommendedName>
        <fullName>Low molecular weight protein-tyrosine-phosphatase PtpA</fullName>
        <ecNumber>3.1.3.48</ecNumber>
    </recommendedName>
    <alternativeName>
        <fullName>Phosphotyrosine phosphatase A</fullName>
        <shortName>PTPase A</shortName>
    </alternativeName>
</protein>
<reference key="1">
    <citation type="book" date="2006" name="Gram positive pathogens, 2nd edition">
        <title>The Staphylococcus aureus NCTC 8325 genome.</title>
        <editorList>
            <person name="Fischetti V."/>
            <person name="Novick R."/>
            <person name="Ferretti J."/>
            <person name="Portnoy D."/>
            <person name="Rood J."/>
        </editorList>
        <authorList>
            <person name="Gillaspy A.F."/>
            <person name="Worrell V."/>
            <person name="Orvis J."/>
            <person name="Roe B.A."/>
            <person name="Dyer D.W."/>
            <person name="Iandolo J.J."/>
        </authorList>
    </citation>
    <scope>NUCLEOTIDE SEQUENCE [LARGE SCALE GENOMIC DNA]</scope>
    <source>
        <strain>NCTC 8325 / PS 47</strain>
    </source>
</reference>
<keyword id="KW-0378">Hydrolase</keyword>
<keyword id="KW-0597">Phosphoprotein</keyword>
<keyword id="KW-0904">Protein phosphatase</keyword>
<keyword id="KW-1185">Reference proteome</keyword>
<keyword id="KW-0964">Secreted</keyword>
<evidence type="ECO:0000250" key="1">
    <source>
        <dbReference type="UniProtKB" id="A0A0H3K9F2"/>
    </source>
</evidence>
<evidence type="ECO:0000250" key="2">
    <source>
        <dbReference type="UniProtKB" id="P11064"/>
    </source>
</evidence>
<evidence type="ECO:0000305" key="3"/>